<protein>
    <recommendedName>
        <fullName evidence="1">NADH-quinone oxidoreductase subunit I</fullName>
        <ecNumber evidence="1">7.1.1.-</ecNumber>
    </recommendedName>
    <alternativeName>
        <fullName evidence="1">NADH dehydrogenase I subunit I</fullName>
    </alternativeName>
    <alternativeName>
        <fullName evidence="1">NDH-1 subunit I</fullName>
    </alternativeName>
</protein>
<proteinExistence type="inferred from homology"/>
<organism>
    <name type="scientific">Roseobacter denitrificans (strain ATCC 33942 / OCh 114)</name>
    <name type="common">Erythrobacter sp. (strain OCh 114)</name>
    <name type="synonym">Roseobacter denitrificans</name>
    <dbReference type="NCBI Taxonomy" id="375451"/>
    <lineage>
        <taxon>Bacteria</taxon>
        <taxon>Pseudomonadati</taxon>
        <taxon>Pseudomonadota</taxon>
        <taxon>Alphaproteobacteria</taxon>
        <taxon>Rhodobacterales</taxon>
        <taxon>Roseobacteraceae</taxon>
        <taxon>Roseobacter</taxon>
    </lineage>
</organism>
<accession>Q163R7</accession>
<feature type="chain" id="PRO_0000250943" description="NADH-quinone oxidoreductase subunit I">
    <location>
        <begin position="1"/>
        <end position="164"/>
    </location>
</feature>
<feature type="domain" description="4Fe-4S ferredoxin-type 1" evidence="1">
    <location>
        <begin position="55"/>
        <end position="85"/>
    </location>
</feature>
<feature type="domain" description="4Fe-4S ferredoxin-type 2" evidence="1">
    <location>
        <begin position="95"/>
        <end position="124"/>
    </location>
</feature>
<feature type="binding site" evidence="1">
    <location>
        <position position="65"/>
    </location>
    <ligand>
        <name>[4Fe-4S] cluster</name>
        <dbReference type="ChEBI" id="CHEBI:49883"/>
        <label>1</label>
    </ligand>
</feature>
<feature type="binding site" evidence="1">
    <location>
        <position position="68"/>
    </location>
    <ligand>
        <name>[4Fe-4S] cluster</name>
        <dbReference type="ChEBI" id="CHEBI:49883"/>
        <label>1</label>
    </ligand>
</feature>
<feature type="binding site" evidence="1">
    <location>
        <position position="71"/>
    </location>
    <ligand>
        <name>[4Fe-4S] cluster</name>
        <dbReference type="ChEBI" id="CHEBI:49883"/>
        <label>1</label>
    </ligand>
</feature>
<feature type="binding site" evidence="1">
    <location>
        <position position="75"/>
    </location>
    <ligand>
        <name>[4Fe-4S] cluster</name>
        <dbReference type="ChEBI" id="CHEBI:49883"/>
        <label>2</label>
    </ligand>
</feature>
<feature type="binding site" evidence="1">
    <location>
        <position position="104"/>
    </location>
    <ligand>
        <name>[4Fe-4S] cluster</name>
        <dbReference type="ChEBI" id="CHEBI:49883"/>
        <label>2</label>
    </ligand>
</feature>
<feature type="binding site" evidence="1">
    <location>
        <position position="107"/>
    </location>
    <ligand>
        <name>[4Fe-4S] cluster</name>
        <dbReference type="ChEBI" id="CHEBI:49883"/>
        <label>2</label>
    </ligand>
</feature>
<feature type="binding site" evidence="1">
    <location>
        <position position="110"/>
    </location>
    <ligand>
        <name>[4Fe-4S] cluster</name>
        <dbReference type="ChEBI" id="CHEBI:49883"/>
        <label>2</label>
    </ligand>
</feature>
<feature type="binding site" evidence="1">
    <location>
        <position position="114"/>
    </location>
    <ligand>
        <name>[4Fe-4S] cluster</name>
        <dbReference type="ChEBI" id="CHEBI:49883"/>
        <label>1</label>
    </ligand>
</feature>
<comment type="function">
    <text evidence="1">NDH-1 shuttles electrons from NADH, via FMN and iron-sulfur (Fe-S) centers, to quinones in the respiratory chain. The immediate electron acceptor for the enzyme in this species is believed to be ubiquinone. Couples the redox reaction to proton translocation (for every two electrons transferred, four hydrogen ions are translocated across the cytoplasmic membrane), and thus conserves the redox energy in a proton gradient.</text>
</comment>
<comment type="catalytic activity">
    <reaction evidence="1">
        <text>a quinone + NADH + 5 H(+)(in) = a quinol + NAD(+) + 4 H(+)(out)</text>
        <dbReference type="Rhea" id="RHEA:57888"/>
        <dbReference type="ChEBI" id="CHEBI:15378"/>
        <dbReference type="ChEBI" id="CHEBI:24646"/>
        <dbReference type="ChEBI" id="CHEBI:57540"/>
        <dbReference type="ChEBI" id="CHEBI:57945"/>
        <dbReference type="ChEBI" id="CHEBI:132124"/>
    </reaction>
</comment>
<comment type="cofactor">
    <cofactor evidence="1">
        <name>[4Fe-4S] cluster</name>
        <dbReference type="ChEBI" id="CHEBI:49883"/>
    </cofactor>
    <text evidence="1">Binds 2 [4Fe-4S] clusters per subunit.</text>
</comment>
<comment type="subunit">
    <text evidence="1">NDH-1 is composed of 14 different subunits. Subunits NuoA, H, J, K, L, M, N constitute the membrane sector of the complex.</text>
</comment>
<comment type="subcellular location">
    <subcellularLocation>
        <location evidence="1">Cell inner membrane</location>
        <topology evidence="1">Peripheral membrane protein</topology>
    </subcellularLocation>
</comment>
<comment type="similarity">
    <text evidence="1">Belongs to the complex I 23 kDa subunit family.</text>
</comment>
<gene>
    <name evidence="1" type="primary">nuoI</name>
    <name type="ordered locus">RD1_3275</name>
</gene>
<keyword id="KW-0004">4Fe-4S</keyword>
<keyword id="KW-0997">Cell inner membrane</keyword>
<keyword id="KW-1003">Cell membrane</keyword>
<keyword id="KW-0408">Iron</keyword>
<keyword id="KW-0411">Iron-sulfur</keyword>
<keyword id="KW-0472">Membrane</keyword>
<keyword id="KW-0479">Metal-binding</keyword>
<keyword id="KW-0520">NAD</keyword>
<keyword id="KW-0874">Quinone</keyword>
<keyword id="KW-1185">Reference proteome</keyword>
<keyword id="KW-0677">Repeat</keyword>
<keyword id="KW-1278">Translocase</keyword>
<keyword id="KW-0830">Ubiquinone</keyword>
<evidence type="ECO:0000255" key="1">
    <source>
        <dbReference type="HAMAP-Rule" id="MF_01351"/>
    </source>
</evidence>
<sequence>MTQVDYTRAAKYFLLQDFWVGMKLGMKYFFAPKATLNYPHEKGPLSPRFRGEHALRRYPNGEERCIACKLCEAVCPAQAITIDAEPRDDGSRRTTRYDIDMTKCIYCGFCEEACPVDAIVEGPNFEFSTETREELYYDKDRLLANGERWEAEIARNLEMDAPYR</sequence>
<reference key="1">
    <citation type="journal article" date="2007" name="J. Bacteriol.">
        <title>The complete genome sequence of Roseobacter denitrificans reveals a mixotrophic rather than photosynthetic metabolism.</title>
        <authorList>
            <person name="Swingley W.D."/>
            <person name="Sadekar S."/>
            <person name="Mastrian S.D."/>
            <person name="Matthies H.J."/>
            <person name="Hao J."/>
            <person name="Ramos H."/>
            <person name="Acharya C.R."/>
            <person name="Conrad A.L."/>
            <person name="Taylor H.L."/>
            <person name="Dejesa L.C."/>
            <person name="Shah M.K."/>
            <person name="O'Huallachain M.E."/>
            <person name="Lince M.T."/>
            <person name="Blankenship R.E."/>
            <person name="Beatty J.T."/>
            <person name="Touchman J.W."/>
        </authorList>
    </citation>
    <scope>NUCLEOTIDE SEQUENCE [LARGE SCALE GENOMIC DNA]</scope>
    <source>
        <strain>ATCC 33942 / OCh 114</strain>
    </source>
</reference>
<dbReference type="EC" id="7.1.1.-" evidence="1"/>
<dbReference type="EMBL" id="CP000362">
    <property type="protein sequence ID" value="ABG32776.1"/>
    <property type="molecule type" value="Genomic_DNA"/>
</dbReference>
<dbReference type="RefSeq" id="WP_011569392.1">
    <property type="nucleotide sequence ID" value="NC_008209.1"/>
</dbReference>
<dbReference type="SMR" id="Q163R7"/>
<dbReference type="STRING" id="375451.RD1_3275"/>
<dbReference type="KEGG" id="rde:RD1_3275"/>
<dbReference type="eggNOG" id="COG1143">
    <property type="taxonomic scope" value="Bacteria"/>
</dbReference>
<dbReference type="HOGENOM" id="CLU_067218_5_1_5"/>
<dbReference type="OrthoDB" id="9808559at2"/>
<dbReference type="Proteomes" id="UP000007029">
    <property type="component" value="Chromosome"/>
</dbReference>
<dbReference type="GO" id="GO:0005886">
    <property type="term" value="C:plasma membrane"/>
    <property type="evidence" value="ECO:0007669"/>
    <property type="project" value="UniProtKB-SubCell"/>
</dbReference>
<dbReference type="GO" id="GO:0051539">
    <property type="term" value="F:4 iron, 4 sulfur cluster binding"/>
    <property type="evidence" value="ECO:0007669"/>
    <property type="project" value="UniProtKB-KW"/>
</dbReference>
<dbReference type="GO" id="GO:0005506">
    <property type="term" value="F:iron ion binding"/>
    <property type="evidence" value="ECO:0007669"/>
    <property type="project" value="UniProtKB-UniRule"/>
</dbReference>
<dbReference type="GO" id="GO:0050136">
    <property type="term" value="F:NADH:ubiquinone reductase (non-electrogenic) activity"/>
    <property type="evidence" value="ECO:0007669"/>
    <property type="project" value="UniProtKB-UniRule"/>
</dbReference>
<dbReference type="GO" id="GO:0048038">
    <property type="term" value="F:quinone binding"/>
    <property type="evidence" value="ECO:0007669"/>
    <property type="project" value="UniProtKB-KW"/>
</dbReference>
<dbReference type="GO" id="GO:0009060">
    <property type="term" value="P:aerobic respiration"/>
    <property type="evidence" value="ECO:0007669"/>
    <property type="project" value="TreeGrafter"/>
</dbReference>
<dbReference type="FunFam" id="3.30.70.3270:FF:000001">
    <property type="entry name" value="NADH-quinone oxidoreductase subunit I 1"/>
    <property type="match status" value="1"/>
</dbReference>
<dbReference type="Gene3D" id="3.30.70.3270">
    <property type="match status" value="1"/>
</dbReference>
<dbReference type="HAMAP" id="MF_01351">
    <property type="entry name" value="NDH1_NuoI"/>
    <property type="match status" value="1"/>
</dbReference>
<dbReference type="InterPro" id="IPR017896">
    <property type="entry name" value="4Fe4S_Fe-S-bd"/>
</dbReference>
<dbReference type="InterPro" id="IPR017900">
    <property type="entry name" value="4Fe4S_Fe_S_CS"/>
</dbReference>
<dbReference type="InterPro" id="IPR010226">
    <property type="entry name" value="NADH_quinone_OxRdtase_chainI"/>
</dbReference>
<dbReference type="NCBIfam" id="TIGR01971">
    <property type="entry name" value="NuoI"/>
    <property type="match status" value="1"/>
</dbReference>
<dbReference type="NCBIfam" id="NF004538">
    <property type="entry name" value="PRK05888.1-4"/>
    <property type="match status" value="1"/>
</dbReference>
<dbReference type="NCBIfam" id="NF004539">
    <property type="entry name" value="PRK05888.1-5"/>
    <property type="match status" value="1"/>
</dbReference>
<dbReference type="PANTHER" id="PTHR10849:SF20">
    <property type="entry name" value="NADH DEHYDROGENASE [UBIQUINONE] IRON-SULFUR PROTEIN 8, MITOCHONDRIAL"/>
    <property type="match status" value="1"/>
</dbReference>
<dbReference type="PANTHER" id="PTHR10849">
    <property type="entry name" value="NADH DEHYDROGENASE UBIQUINONE IRON-SULFUR PROTEIN 8, MITOCHONDRIAL"/>
    <property type="match status" value="1"/>
</dbReference>
<dbReference type="Pfam" id="PF12838">
    <property type="entry name" value="Fer4_7"/>
    <property type="match status" value="1"/>
</dbReference>
<dbReference type="SUPFAM" id="SSF54862">
    <property type="entry name" value="4Fe-4S ferredoxins"/>
    <property type="match status" value="1"/>
</dbReference>
<dbReference type="PROSITE" id="PS00198">
    <property type="entry name" value="4FE4S_FER_1"/>
    <property type="match status" value="2"/>
</dbReference>
<dbReference type="PROSITE" id="PS51379">
    <property type="entry name" value="4FE4S_FER_2"/>
    <property type="match status" value="2"/>
</dbReference>
<name>NUOI_ROSDO</name>